<feature type="chain" id="PRO_1000131569" description="UPF0761 membrane protein Smlt0865">
    <location>
        <begin position="1"/>
        <end position="424"/>
    </location>
</feature>
<feature type="transmembrane region" description="Helical" evidence="1">
    <location>
        <begin position="48"/>
        <end position="68"/>
    </location>
</feature>
<feature type="transmembrane region" description="Helical" evidence="1">
    <location>
        <begin position="101"/>
        <end position="121"/>
    </location>
</feature>
<feature type="transmembrane region" description="Helical" evidence="1">
    <location>
        <begin position="144"/>
        <end position="164"/>
    </location>
</feature>
<feature type="transmembrane region" description="Helical" evidence="1">
    <location>
        <begin position="181"/>
        <end position="201"/>
    </location>
</feature>
<feature type="transmembrane region" description="Helical" evidence="1">
    <location>
        <begin position="216"/>
        <end position="236"/>
    </location>
</feature>
<feature type="transmembrane region" description="Helical" evidence="1">
    <location>
        <begin position="251"/>
        <end position="271"/>
    </location>
</feature>
<proteinExistence type="inferred from homology"/>
<organism>
    <name type="scientific">Stenotrophomonas maltophilia (strain K279a)</name>
    <dbReference type="NCBI Taxonomy" id="522373"/>
    <lineage>
        <taxon>Bacteria</taxon>
        <taxon>Pseudomonadati</taxon>
        <taxon>Pseudomonadota</taxon>
        <taxon>Gammaproteobacteria</taxon>
        <taxon>Lysobacterales</taxon>
        <taxon>Lysobacteraceae</taxon>
        <taxon>Stenotrophomonas</taxon>
        <taxon>Stenotrophomonas maltophilia group</taxon>
    </lineage>
</organism>
<comment type="subcellular location">
    <subcellularLocation>
        <location evidence="1">Cell inner membrane</location>
        <topology evidence="1">Multi-pass membrane protein</topology>
    </subcellularLocation>
</comment>
<comment type="similarity">
    <text evidence="1">Belongs to the UPF0761 family.</text>
</comment>
<evidence type="ECO:0000255" key="1">
    <source>
        <dbReference type="HAMAP-Rule" id="MF_00672"/>
    </source>
</evidence>
<sequence length="424" mass="47769">MEPLDTLNLWMERARDRARAISFGRFLWHRFLDDRLFQAAAALAYTTVFALVPLAIVVFGVLSAFPVFDRWSDQLSDYVFSNFVPNAARAAEGYLRQFSASAGQLTAAGFIALVVSLLITLNSVEETFNQIWRVGSTRPKLTRFLVYWTVLTLGAMLAAASLAVSARVFAMPLFGTQEGRWLAELALRLAPILIEFVCITLMFRVVPHHTVKWRHAVPGAILAAVILELVKWGIGAYLGSFQSYQKLYGTVAFVPILLLWIYLCWVAVLLGASLSSSMAAFRYQPVELRLPQGYEFYGLLRLLGRFHHARAKGKGLADDEILRLEPMLTDSLLQDLACNLQEIGLLRRDERGEWLLSRDLDQVSLADLYECTQLRIPVAEQHLPYRDDSLGRAALAALDDLRLPLRERLKRKVSDIYTDSGDMP</sequence>
<keyword id="KW-0997">Cell inner membrane</keyword>
<keyword id="KW-1003">Cell membrane</keyword>
<keyword id="KW-0472">Membrane</keyword>
<keyword id="KW-1185">Reference proteome</keyword>
<keyword id="KW-0812">Transmembrane</keyword>
<keyword id="KW-1133">Transmembrane helix</keyword>
<dbReference type="EMBL" id="AM743169">
    <property type="protein sequence ID" value="CAQ44440.1"/>
    <property type="molecule type" value="Genomic_DNA"/>
</dbReference>
<dbReference type="RefSeq" id="WP_005408182.1">
    <property type="nucleotide sequence ID" value="NC_010943.1"/>
</dbReference>
<dbReference type="SMR" id="B2FQ10"/>
<dbReference type="EnsemblBacteria" id="CAQ44440">
    <property type="protein sequence ID" value="CAQ44440"/>
    <property type="gene ID" value="Smlt0865"/>
</dbReference>
<dbReference type="KEGG" id="sml:Smlt0865"/>
<dbReference type="eggNOG" id="COG1295">
    <property type="taxonomic scope" value="Bacteria"/>
</dbReference>
<dbReference type="HOGENOM" id="CLU_032288_1_0_6"/>
<dbReference type="Proteomes" id="UP000008840">
    <property type="component" value="Chromosome"/>
</dbReference>
<dbReference type="GO" id="GO:0005886">
    <property type="term" value="C:plasma membrane"/>
    <property type="evidence" value="ECO:0007669"/>
    <property type="project" value="UniProtKB-SubCell"/>
</dbReference>
<dbReference type="HAMAP" id="MF_00672">
    <property type="entry name" value="UPF0761"/>
    <property type="match status" value="1"/>
</dbReference>
<dbReference type="InterPro" id="IPR023679">
    <property type="entry name" value="UPF0761_bac"/>
</dbReference>
<dbReference type="InterPro" id="IPR017039">
    <property type="entry name" value="Virul_fac_BrkB"/>
</dbReference>
<dbReference type="NCBIfam" id="NF003256">
    <property type="entry name" value="PRK04214.1"/>
    <property type="match status" value="1"/>
</dbReference>
<dbReference type="NCBIfam" id="TIGR00765">
    <property type="entry name" value="yihY_not_rbn"/>
    <property type="match status" value="1"/>
</dbReference>
<dbReference type="PANTHER" id="PTHR30213">
    <property type="entry name" value="INNER MEMBRANE PROTEIN YHJD"/>
    <property type="match status" value="1"/>
</dbReference>
<dbReference type="PANTHER" id="PTHR30213:SF0">
    <property type="entry name" value="UPF0761 MEMBRANE PROTEIN YIHY"/>
    <property type="match status" value="1"/>
</dbReference>
<dbReference type="Pfam" id="PF03631">
    <property type="entry name" value="Virul_fac_BrkB"/>
    <property type="match status" value="1"/>
</dbReference>
<name>Y865_STRMK</name>
<gene>
    <name type="ordered locus">Smlt0865</name>
</gene>
<accession>B2FQ10</accession>
<reference key="1">
    <citation type="journal article" date="2008" name="Genome Biol.">
        <title>The complete genome, comparative and functional analysis of Stenotrophomonas maltophilia reveals an organism heavily shielded by drug resistance determinants.</title>
        <authorList>
            <person name="Crossman L.C."/>
            <person name="Gould V.C."/>
            <person name="Dow J.M."/>
            <person name="Vernikos G.S."/>
            <person name="Okazaki A."/>
            <person name="Sebaihia M."/>
            <person name="Saunders D."/>
            <person name="Arrowsmith C."/>
            <person name="Carver T."/>
            <person name="Peters N."/>
            <person name="Adlem E."/>
            <person name="Kerhornou A."/>
            <person name="Lord A."/>
            <person name="Murphy L."/>
            <person name="Seeger K."/>
            <person name="Squares R."/>
            <person name="Rutter S."/>
            <person name="Quail M.A."/>
            <person name="Rajandream M.A."/>
            <person name="Harris D."/>
            <person name="Churcher C."/>
            <person name="Bentley S.D."/>
            <person name="Parkhill J."/>
            <person name="Thomson N.R."/>
            <person name="Avison M.B."/>
        </authorList>
    </citation>
    <scope>NUCLEOTIDE SEQUENCE [LARGE SCALE GENOMIC DNA]</scope>
    <source>
        <strain>K279a</strain>
    </source>
</reference>
<protein>
    <recommendedName>
        <fullName evidence="1">UPF0761 membrane protein Smlt0865</fullName>
    </recommendedName>
</protein>